<protein>
    <recommendedName>
        <fullName evidence="1">Argininosuccinate lyase</fullName>
        <shortName evidence="1">ASAL</shortName>
        <ecNumber evidence="1">4.3.2.1</ecNumber>
    </recommendedName>
    <alternativeName>
        <fullName evidence="1">Arginosuccinase</fullName>
    </alternativeName>
</protein>
<sequence length="473" mass="50941">MSSNNGDVRLWGGRFADGPADALARLSASVHFDWRLAPYDIAGSRAHARVLNRAGLLTEDELTRMLAGLDRWPPMWRTLLHRTIADEDVHTALERGLLERLGAELGGKLRAGRSRNDQVATLFRMYLRTTPGSSGLIAELQDALVGLAEAHPEVAMPGRTHLQHAQPVLFAHHVLAHVQALSRDAERLRQWDARTAVSPYGSGALAGSSLGLDPEAVAADLGFEGGSAGNSIDGTASRDFVAEFAFITAMAGINLSRLAEEIIIWNTKEFSFVTLHDAFSTGSSIMPQKKNPDIAELARGKSGRLIGNLTGLLATLKALPLAYNRDLQEDKEPVFDSCDQLEVLLPAFTGMVATLTVHRERMEELAPAGFSLATDIAEWLVRQGVPFRVAHDVAGACVKECESAGIELHQLTDEQFAAISEHLTPEVRSVLTVRGALASRDGRGGTAPSAVAVQLAEVKADLAVQHAWAARES</sequence>
<accession>P50988</accession>
<gene>
    <name evidence="1" type="primary">argH</name>
</gene>
<reference key="1">
    <citation type="journal article" date="2000" name="J. Mol. Microbiol. Biotechnol.">
        <title>Characterization and expression of the arginine biosynthesis gene cluster of Streptomyces clavuligerus.</title>
        <authorList>
            <person name="Rodriguez-Garcia A."/>
            <person name="de la Fuente A."/>
            <person name="Perez-Redondo R."/>
            <person name="Martin J.F."/>
            <person name="Liras P."/>
        </authorList>
    </citation>
    <scope>NUCLEOTIDE SEQUENCE [GENOMIC DNA]</scope>
    <source>
        <strain>ATCC 27064 / DSM 738 / JCM 4710 / NBRC 13307 / NCIMB 12785 / NRRL 3585 / VKM Ac-602</strain>
    </source>
</reference>
<reference key="2">
    <citation type="journal article" date="1995" name="Gene">
        <title>The argG gene of Streptomyces clavuligerus has low homology to unstable argG from other actinomycetes: effect of amplification on clavulanic acid biosynthesis.</title>
        <authorList>
            <person name="Rodriguez-Garcia A."/>
            <person name="Martin J.F."/>
            <person name="Liras P."/>
        </authorList>
    </citation>
    <scope>NUCLEOTIDE SEQUENCE [GENOMIC DNA] OF 1-110</scope>
    <source>
        <strain>ATCC 27064 / DSM 738 / JCM 4710 / NBRC 13307 / NCIMB 12785 / NRRL 3585 / VKM Ac-602</strain>
    </source>
</reference>
<keyword id="KW-0028">Amino-acid biosynthesis</keyword>
<keyword id="KW-0055">Arginine biosynthesis</keyword>
<keyword id="KW-0963">Cytoplasm</keyword>
<keyword id="KW-0456">Lyase</keyword>
<comment type="catalytic activity">
    <reaction evidence="1">
        <text>2-(N(omega)-L-arginino)succinate = fumarate + L-arginine</text>
        <dbReference type="Rhea" id="RHEA:24020"/>
        <dbReference type="ChEBI" id="CHEBI:29806"/>
        <dbReference type="ChEBI" id="CHEBI:32682"/>
        <dbReference type="ChEBI" id="CHEBI:57472"/>
        <dbReference type="EC" id="4.3.2.1"/>
    </reaction>
</comment>
<comment type="pathway">
    <text evidence="1">Amino-acid biosynthesis; L-arginine biosynthesis; L-arginine from L-ornithine and carbamoyl phosphate: step 3/3.</text>
</comment>
<comment type="subcellular location">
    <subcellularLocation>
        <location evidence="1">Cytoplasm</location>
    </subcellularLocation>
</comment>
<comment type="similarity">
    <text evidence="1">Belongs to the lyase 1 family. Argininosuccinate lyase subfamily.</text>
</comment>
<proteinExistence type="inferred from homology"/>
<evidence type="ECO:0000255" key="1">
    <source>
        <dbReference type="HAMAP-Rule" id="MF_00006"/>
    </source>
</evidence>
<feature type="chain" id="PRO_0000137832" description="Argininosuccinate lyase">
    <location>
        <begin position="1"/>
        <end position="473"/>
    </location>
</feature>
<organism>
    <name type="scientific">Streptomyces clavuligerus</name>
    <dbReference type="NCBI Taxonomy" id="1901"/>
    <lineage>
        <taxon>Bacteria</taxon>
        <taxon>Bacillati</taxon>
        <taxon>Actinomycetota</taxon>
        <taxon>Actinomycetes</taxon>
        <taxon>Kitasatosporales</taxon>
        <taxon>Streptomycetaceae</taxon>
        <taxon>Streptomyces</taxon>
    </lineage>
</organism>
<dbReference type="EC" id="4.3.2.1" evidence="1"/>
<dbReference type="EMBL" id="Z49111">
    <property type="protein sequence ID" value="CAA88927.2"/>
    <property type="molecule type" value="Genomic_DNA"/>
</dbReference>
<dbReference type="PIR" id="PC4128">
    <property type="entry name" value="S57660"/>
</dbReference>
<dbReference type="SMR" id="P50988"/>
<dbReference type="STRING" id="1901.BB341_23970"/>
<dbReference type="eggNOG" id="COG0165">
    <property type="taxonomic scope" value="Bacteria"/>
</dbReference>
<dbReference type="UniPathway" id="UPA00068">
    <property type="reaction ID" value="UER00114"/>
</dbReference>
<dbReference type="GO" id="GO:0005829">
    <property type="term" value="C:cytosol"/>
    <property type="evidence" value="ECO:0007669"/>
    <property type="project" value="TreeGrafter"/>
</dbReference>
<dbReference type="GO" id="GO:0004056">
    <property type="term" value="F:argininosuccinate lyase activity"/>
    <property type="evidence" value="ECO:0007669"/>
    <property type="project" value="UniProtKB-UniRule"/>
</dbReference>
<dbReference type="GO" id="GO:0042450">
    <property type="term" value="P:arginine biosynthetic process via ornithine"/>
    <property type="evidence" value="ECO:0007669"/>
    <property type="project" value="InterPro"/>
</dbReference>
<dbReference type="GO" id="GO:0006526">
    <property type="term" value="P:L-arginine biosynthetic process"/>
    <property type="evidence" value="ECO:0007669"/>
    <property type="project" value="UniProtKB-UniRule"/>
</dbReference>
<dbReference type="CDD" id="cd01359">
    <property type="entry name" value="Argininosuccinate_lyase"/>
    <property type="match status" value="1"/>
</dbReference>
<dbReference type="FunFam" id="1.10.40.30:FF:000001">
    <property type="entry name" value="Argininosuccinate lyase"/>
    <property type="match status" value="1"/>
</dbReference>
<dbReference type="FunFam" id="1.20.200.10:FF:000002">
    <property type="entry name" value="Argininosuccinate lyase"/>
    <property type="match status" value="1"/>
</dbReference>
<dbReference type="Gene3D" id="1.10.40.30">
    <property type="entry name" value="Fumarase/aspartase (C-terminal domain)"/>
    <property type="match status" value="1"/>
</dbReference>
<dbReference type="Gene3D" id="1.20.200.10">
    <property type="entry name" value="Fumarase/aspartase (Central domain)"/>
    <property type="match status" value="1"/>
</dbReference>
<dbReference type="Gene3D" id="1.10.275.10">
    <property type="entry name" value="Fumarase/aspartase (N-terminal domain)"/>
    <property type="match status" value="1"/>
</dbReference>
<dbReference type="HAMAP" id="MF_00006">
    <property type="entry name" value="Arg_succ_lyase"/>
    <property type="match status" value="1"/>
</dbReference>
<dbReference type="InterPro" id="IPR029419">
    <property type="entry name" value="Arg_succ_lyase_C"/>
</dbReference>
<dbReference type="InterPro" id="IPR009049">
    <property type="entry name" value="Argininosuccinate_lyase"/>
</dbReference>
<dbReference type="InterPro" id="IPR024083">
    <property type="entry name" value="Fumarase/histidase_N"/>
</dbReference>
<dbReference type="InterPro" id="IPR020557">
    <property type="entry name" value="Fumarate_lyase_CS"/>
</dbReference>
<dbReference type="InterPro" id="IPR000362">
    <property type="entry name" value="Fumarate_lyase_fam"/>
</dbReference>
<dbReference type="InterPro" id="IPR022761">
    <property type="entry name" value="Fumarate_lyase_N"/>
</dbReference>
<dbReference type="InterPro" id="IPR008948">
    <property type="entry name" value="L-Aspartase-like"/>
</dbReference>
<dbReference type="NCBIfam" id="TIGR00838">
    <property type="entry name" value="argH"/>
    <property type="match status" value="1"/>
</dbReference>
<dbReference type="PANTHER" id="PTHR43814">
    <property type="entry name" value="ARGININOSUCCINATE LYASE"/>
    <property type="match status" value="1"/>
</dbReference>
<dbReference type="PANTHER" id="PTHR43814:SF1">
    <property type="entry name" value="ARGININOSUCCINATE LYASE"/>
    <property type="match status" value="1"/>
</dbReference>
<dbReference type="Pfam" id="PF14698">
    <property type="entry name" value="ASL_C2"/>
    <property type="match status" value="1"/>
</dbReference>
<dbReference type="Pfam" id="PF00206">
    <property type="entry name" value="Lyase_1"/>
    <property type="match status" value="1"/>
</dbReference>
<dbReference type="PRINTS" id="PR00145">
    <property type="entry name" value="ARGSUCLYASE"/>
</dbReference>
<dbReference type="PRINTS" id="PR00149">
    <property type="entry name" value="FUMRATELYASE"/>
</dbReference>
<dbReference type="SUPFAM" id="SSF48557">
    <property type="entry name" value="L-aspartase-like"/>
    <property type="match status" value="1"/>
</dbReference>
<dbReference type="PROSITE" id="PS00163">
    <property type="entry name" value="FUMARATE_LYASES"/>
    <property type="match status" value="1"/>
</dbReference>
<name>ARLY_STRCL</name>